<evidence type="ECO:0000255" key="1">
    <source>
        <dbReference type="PROSITE-ProRule" id="PRU00159"/>
    </source>
</evidence>
<evidence type="ECO:0000256" key="2">
    <source>
        <dbReference type="SAM" id="MobiDB-lite"/>
    </source>
</evidence>
<evidence type="ECO:0000269" key="3">
    <source>
    </source>
</evidence>
<evidence type="ECO:0000269" key="4">
    <source>
    </source>
</evidence>
<evidence type="ECO:0000303" key="5">
    <source>
    </source>
</evidence>
<evidence type="ECO:0000303" key="6">
    <source>
    </source>
</evidence>
<evidence type="ECO:0000305" key="7"/>
<evidence type="ECO:0000312" key="8">
    <source>
        <dbReference type="Araport" id="AT1G16440"/>
    </source>
</evidence>
<evidence type="ECO:0000312" key="9">
    <source>
        <dbReference type="EMBL" id="AAD34696.1"/>
    </source>
</evidence>
<name>RHS3_ARATH</name>
<dbReference type="EC" id="2.7.11.1" evidence="3"/>
<dbReference type="EMBL" id="AC006341">
    <property type="protein sequence ID" value="AAD34696.1"/>
    <property type="status" value="ALT_SEQ"/>
    <property type="molecule type" value="Genomic_DNA"/>
</dbReference>
<dbReference type="EMBL" id="CP002684">
    <property type="protein sequence ID" value="AEE29451.1"/>
    <property type="molecule type" value="Genomic_DNA"/>
</dbReference>
<dbReference type="EMBL" id="DQ446257">
    <property type="protein sequence ID" value="ABE65627.1"/>
    <property type="molecule type" value="mRNA"/>
</dbReference>
<dbReference type="EMBL" id="DQ652840">
    <property type="protein sequence ID" value="ABK28399.1"/>
    <property type="status" value="ALT_SEQ"/>
    <property type="molecule type" value="mRNA"/>
</dbReference>
<dbReference type="PIR" id="G86299">
    <property type="entry name" value="G86299"/>
</dbReference>
<dbReference type="RefSeq" id="NP_173094.4">
    <property type="nucleotide sequence ID" value="NM_101510.6"/>
</dbReference>
<dbReference type="SMR" id="F4I4F2"/>
<dbReference type="FunCoup" id="F4I4F2">
    <property type="interactions" value="106"/>
</dbReference>
<dbReference type="IntAct" id="F4I4F2">
    <property type="interactions" value="1"/>
</dbReference>
<dbReference type="STRING" id="3702.F4I4F2"/>
<dbReference type="iPTMnet" id="F4I4F2"/>
<dbReference type="PaxDb" id="3702-AT1G16440.1"/>
<dbReference type="ProteomicsDB" id="236918"/>
<dbReference type="EnsemblPlants" id="AT1G16440.1">
    <property type="protein sequence ID" value="AT1G16440.1"/>
    <property type="gene ID" value="AT1G16440"/>
</dbReference>
<dbReference type="GeneID" id="838214"/>
<dbReference type="Gramene" id="AT1G16440.1">
    <property type="protein sequence ID" value="AT1G16440.1"/>
    <property type="gene ID" value="AT1G16440"/>
</dbReference>
<dbReference type="KEGG" id="ath:AT1G16440"/>
<dbReference type="Araport" id="AT1G16440"/>
<dbReference type="TAIR" id="AT1G16440">
    <property type="gene designation" value="RSH3"/>
</dbReference>
<dbReference type="eggNOG" id="KOG0610">
    <property type="taxonomic scope" value="Eukaryota"/>
</dbReference>
<dbReference type="HOGENOM" id="CLU_000288_63_30_1"/>
<dbReference type="InParanoid" id="F4I4F2"/>
<dbReference type="OMA" id="YIVFEYF"/>
<dbReference type="PRO" id="PR:F4I4F2"/>
<dbReference type="Proteomes" id="UP000006548">
    <property type="component" value="Chromosome 1"/>
</dbReference>
<dbReference type="ExpressionAtlas" id="F4I4F2">
    <property type="expression patterns" value="baseline and differential"/>
</dbReference>
<dbReference type="GO" id="GO:0005524">
    <property type="term" value="F:ATP binding"/>
    <property type="evidence" value="ECO:0007669"/>
    <property type="project" value="UniProtKB-KW"/>
</dbReference>
<dbReference type="GO" id="GO:0016301">
    <property type="term" value="F:kinase activity"/>
    <property type="evidence" value="ECO:0000250"/>
    <property type="project" value="TAIR"/>
</dbReference>
<dbReference type="GO" id="GO:0106310">
    <property type="term" value="F:protein serine kinase activity"/>
    <property type="evidence" value="ECO:0007669"/>
    <property type="project" value="RHEA"/>
</dbReference>
<dbReference type="GO" id="GO:0004674">
    <property type="term" value="F:protein serine/threonine kinase activity"/>
    <property type="evidence" value="ECO:0000314"/>
    <property type="project" value="UniProtKB"/>
</dbReference>
<dbReference type="GO" id="GO:0080147">
    <property type="term" value="P:root hair cell development"/>
    <property type="evidence" value="ECO:0000315"/>
    <property type="project" value="UniProtKB"/>
</dbReference>
<dbReference type="CDD" id="cd05574">
    <property type="entry name" value="STKc_phototropin_like"/>
    <property type="match status" value="1"/>
</dbReference>
<dbReference type="FunFam" id="1.10.510.10:FF:000295">
    <property type="entry name" value="Serine/threonine-protein kinase AGC1-7"/>
    <property type="match status" value="1"/>
</dbReference>
<dbReference type="FunFam" id="3.30.200.20:FF:000032">
    <property type="entry name" value="Serine/threonine-protein kinase D6PK-like"/>
    <property type="match status" value="1"/>
</dbReference>
<dbReference type="FunFam" id="1.10.510.10:FF:000028">
    <property type="entry name" value="serine/threonine-protein kinase D6PK-like"/>
    <property type="match status" value="1"/>
</dbReference>
<dbReference type="Gene3D" id="3.30.200.20">
    <property type="entry name" value="Phosphorylase Kinase, domain 1"/>
    <property type="match status" value="1"/>
</dbReference>
<dbReference type="Gene3D" id="1.10.510.10">
    <property type="entry name" value="Transferase(Phosphotransferase) domain 1"/>
    <property type="match status" value="2"/>
</dbReference>
<dbReference type="InterPro" id="IPR011009">
    <property type="entry name" value="Kinase-like_dom_sf"/>
</dbReference>
<dbReference type="InterPro" id="IPR000719">
    <property type="entry name" value="Prot_kinase_dom"/>
</dbReference>
<dbReference type="InterPro" id="IPR008271">
    <property type="entry name" value="Ser/Thr_kinase_AS"/>
</dbReference>
<dbReference type="PANTHER" id="PTHR45637">
    <property type="entry name" value="FLIPPASE KINASE 1-RELATED"/>
    <property type="match status" value="1"/>
</dbReference>
<dbReference type="Pfam" id="PF00069">
    <property type="entry name" value="Pkinase"/>
    <property type="match status" value="2"/>
</dbReference>
<dbReference type="SMART" id="SM00220">
    <property type="entry name" value="S_TKc"/>
    <property type="match status" value="1"/>
</dbReference>
<dbReference type="SUPFAM" id="SSF56112">
    <property type="entry name" value="Protein kinase-like (PK-like)"/>
    <property type="match status" value="1"/>
</dbReference>
<dbReference type="PROSITE" id="PS50011">
    <property type="entry name" value="PROTEIN_KINASE_DOM"/>
    <property type="match status" value="1"/>
</dbReference>
<dbReference type="PROSITE" id="PS00108">
    <property type="entry name" value="PROTEIN_KINASE_ST"/>
    <property type="match status" value="1"/>
</dbReference>
<comment type="function">
    <text evidence="4">Involved in root hair growth and morphogenesis.</text>
</comment>
<comment type="catalytic activity">
    <reaction evidence="3">
        <text>L-seryl-[protein] + ATP = O-phospho-L-seryl-[protein] + ADP + H(+)</text>
        <dbReference type="Rhea" id="RHEA:17989"/>
        <dbReference type="Rhea" id="RHEA-COMP:9863"/>
        <dbReference type="Rhea" id="RHEA-COMP:11604"/>
        <dbReference type="ChEBI" id="CHEBI:15378"/>
        <dbReference type="ChEBI" id="CHEBI:29999"/>
        <dbReference type="ChEBI" id="CHEBI:30616"/>
        <dbReference type="ChEBI" id="CHEBI:83421"/>
        <dbReference type="ChEBI" id="CHEBI:456216"/>
        <dbReference type="EC" id="2.7.11.1"/>
    </reaction>
</comment>
<comment type="catalytic activity">
    <reaction evidence="3">
        <text>L-threonyl-[protein] + ATP = O-phospho-L-threonyl-[protein] + ADP + H(+)</text>
        <dbReference type="Rhea" id="RHEA:46608"/>
        <dbReference type="Rhea" id="RHEA-COMP:11060"/>
        <dbReference type="Rhea" id="RHEA-COMP:11605"/>
        <dbReference type="ChEBI" id="CHEBI:15378"/>
        <dbReference type="ChEBI" id="CHEBI:30013"/>
        <dbReference type="ChEBI" id="CHEBI:30616"/>
        <dbReference type="ChEBI" id="CHEBI:61977"/>
        <dbReference type="ChEBI" id="CHEBI:456216"/>
        <dbReference type="EC" id="2.7.11.1"/>
    </reaction>
</comment>
<comment type="activity regulation">
    <text evidence="3">Activated by PDPK1/PDK1.</text>
</comment>
<comment type="subunit">
    <text evidence="3">Interacts with PDPK1/PDK1.</text>
</comment>
<comment type="interaction">
    <interactant intactId="EBI-1103713">
        <id>F4I4F2</id>
    </interactant>
    <interactant intactId="EBI-1103587">
        <id>Q9XF67</id>
        <label>PDPK1</label>
    </interactant>
    <organismsDiffer>false</organismsDiffer>
    <experiments>2</experiments>
</comment>
<comment type="tissue specificity">
    <text evidence="4">Specifically expressed in root hair cells.</text>
</comment>
<comment type="PTM">
    <text evidence="3">Autophosphorylated and phosphorylated by PDPK1/PDK1.</text>
</comment>
<comment type="miscellaneous">
    <text evidence="4">Plants over-expressing RHS3 show altered root hair morphology, such as spiral, bent or branched hairs.</text>
</comment>
<comment type="similarity">
    <text evidence="7">Belongs to the protein kinase superfamily. AGC Ser/Thr protein kinase family.</text>
</comment>
<comment type="sequence caution" evidence="7">
    <conflict type="erroneous gene model prediction">
        <sequence resource="EMBL-CDS" id="AAD34696"/>
    </conflict>
</comment>
<comment type="sequence caution" evidence="7">
    <conflict type="erroneous termination">
        <sequence resource="EMBL-CDS" id="ABK28399"/>
    </conflict>
    <text>Extended C-terminus.</text>
</comment>
<organism>
    <name type="scientific">Arabidopsis thaliana</name>
    <name type="common">Mouse-ear cress</name>
    <dbReference type="NCBI Taxonomy" id="3702"/>
    <lineage>
        <taxon>Eukaryota</taxon>
        <taxon>Viridiplantae</taxon>
        <taxon>Streptophyta</taxon>
        <taxon>Embryophyta</taxon>
        <taxon>Tracheophyta</taxon>
        <taxon>Spermatophyta</taxon>
        <taxon>Magnoliopsida</taxon>
        <taxon>eudicotyledons</taxon>
        <taxon>Gunneridae</taxon>
        <taxon>Pentapetalae</taxon>
        <taxon>rosids</taxon>
        <taxon>malvids</taxon>
        <taxon>Brassicales</taxon>
        <taxon>Brassicaceae</taxon>
        <taxon>Camelineae</taxon>
        <taxon>Arabidopsis</taxon>
    </lineage>
</organism>
<gene>
    <name evidence="6" type="primary">RHS3</name>
    <name evidence="5" type="synonym">AGC1-6</name>
    <name evidence="8" type="ordered locus">At1g16440</name>
    <name evidence="9" type="ORF">F3O9.24</name>
</gene>
<reference key="1">
    <citation type="journal article" date="2000" name="Nature">
        <title>Sequence and analysis of chromosome 1 of the plant Arabidopsis thaliana.</title>
        <authorList>
            <person name="Theologis A."/>
            <person name="Ecker J.R."/>
            <person name="Palm C.J."/>
            <person name="Federspiel N.A."/>
            <person name="Kaul S."/>
            <person name="White O."/>
            <person name="Alonso J."/>
            <person name="Altafi H."/>
            <person name="Araujo R."/>
            <person name="Bowman C.L."/>
            <person name="Brooks S.Y."/>
            <person name="Buehler E."/>
            <person name="Chan A."/>
            <person name="Chao Q."/>
            <person name="Chen H."/>
            <person name="Cheuk R.F."/>
            <person name="Chin C.W."/>
            <person name="Chung M.K."/>
            <person name="Conn L."/>
            <person name="Conway A.B."/>
            <person name="Conway A.R."/>
            <person name="Creasy T.H."/>
            <person name="Dewar K."/>
            <person name="Dunn P."/>
            <person name="Etgu P."/>
            <person name="Feldblyum T.V."/>
            <person name="Feng J.-D."/>
            <person name="Fong B."/>
            <person name="Fujii C.Y."/>
            <person name="Gill J.E."/>
            <person name="Goldsmith A.D."/>
            <person name="Haas B."/>
            <person name="Hansen N.F."/>
            <person name="Hughes B."/>
            <person name="Huizar L."/>
            <person name="Hunter J.L."/>
            <person name="Jenkins J."/>
            <person name="Johnson-Hopson C."/>
            <person name="Khan S."/>
            <person name="Khaykin E."/>
            <person name="Kim C.J."/>
            <person name="Koo H.L."/>
            <person name="Kremenetskaia I."/>
            <person name="Kurtz D.B."/>
            <person name="Kwan A."/>
            <person name="Lam B."/>
            <person name="Langin-Hooper S."/>
            <person name="Lee A."/>
            <person name="Lee J.M."/>
            <person name="Lenz C.A."/>
            <person name="Li J.H."/>
            <person name="Li Y.-P."/>
            <person name="Lin X."/>
            <person name="Liu S.X."/>
            <person name="Liu Z.A."/>
            <person name="Luros J.S."/>
            <person name="Maiti R."/>
            <person name="Marziali A."/>
            <person name="Militscher J."/>
            <person name="Miranda M."/>
            <person name="Nguyen M."/>
            <person name="Nierman W.C."/>
            <person name="Osborne B.I."/>
            <person name="Pai G."/>
            <person name="Peterson J."/>
            <person name="Pham P.K."/>
            <person name="Rizzo M."/>
            <person name="Rooney T."/>
            <person name="Rowley D."/>
            <person name="Sakano H."/>
            <person name="Salzberg S.L."/>
            <person name="Schwartz J.R."/>
            <person name="Shinn P."/>
            <person name="Southwick A.M."/>
            <person name="Sun H."/>
            <person name="Tallon L.J."/>
            <person name="Tambunga G."/>
            <person name="Toriumi M.J."/>
            <person name="Town C.D."/>
            <person name="Utterback T."/>
            <person name="Van Aken S."/>
            <person name="Vaysberg M."/>
            <person name="Vysotskaia V.S."/>
            <person name="Walker M."/>
            <person name="Wu D."/>
            <person name="Yu G."/>
            <person name="Fraser C.M."/>
            <person name="Venter J.C."/>
            <person name="Davis R.W."/>
        </authorList>
    </citation>
    <scope>NUCLEOTIDE SEQUENCE [LARGE SCALE GENOMIC DNA]</scope>
    <source>
        <strain>cv. Columbia</strain>
    </source>
</reference>
<reference key="2">
    <citation type="journal article" date="2017" name="Plant J.">
        <title>Araport11: a complete reannotation of the Arabidopsis thaliana reference genome.</title>
        <authorList>
            <person name="Cheng C.Y."/>
            <person name="Krishnakumar V."/>
            <person name="Chan A.P."/>
            <person name="Thibaud-Nissen F."/>
            <person name="Schobel S."/>
            <person name="Town C.D."/>
        </authorList>
    </citation>
    <scope>GENOME REANNOTATION</scope>
    <source>
        <strain>cv. Columbia</strain>
    </source>
</reference>
<reference key="3">
    <citation type="journal article" date="2006" name="Plant Biotechnol. J.">
        <title>Simultaneous high-throughput recombinational cloning of open reading frames in closed and open configurations.</title>
        <authorList>
            <person name="Underwood B.A."/>
            <person name="Vanderhaeghen R."/>
            <person name="Whitford R."/>
            <person name="Town C.D."/>
            <person name="Hilson P."/>
        </authorList>
    </citation>
    <scope>NUCLEOTIDE SEQUENCE [LARGE SCALE MRNA] OF 69-499</scope>
    <source>
        <strain>cv. Columbia</strain>
    </source>
</reference>
<reference key="4">
    <citation type="journal article" date="2003" name="Trends Plant Sci.">
        <title>Growth signalling pathways in Arabidopsis and the AGC protein kinases.</title>
        <authorList>
            <person name="Boegre L."/>
            <person name="Okresz L."/>
            <person name="Henriques R."/>
            <person name="Anthony R.G."/>
        </authorList>
    </citation>
    <scope>GENE FAMILY</scope>
</reference>
<reference key="5">
    <citation type="journal article" date="2006" name="J. Biol. Chem.">
        <title>Structural and functional insights into the regulation of Arabidopsis AGC VIIIa kinases.</title>
        <authorList>
            <person name="Zegzouti H."/>
            <person name="Li W."/>
            <person name="Lorenz T.C."/>
            <person name="Xie M."/>
            <person name="Payne C.T."/>
            <person name="Smith K."/>
            <person name="Glenny S."/>
            <person name="Payne G.S."/>
            <person name="Christensen S.K."/>
        </authorList>
    </citation>
    <scope>CATALYTIC ACTIVITY</scope>
    <scope>ACTIVITY REGULATION</scope>
    <scope>INTERACTION WITH PDPK1/PDK1</scope>
    <scope>AUTOPHOSPHORYLATION</scope>
    <scope>PHOSPHORYLATION BY PDPK1/PDK1</scope>
</reference>
<reference key="6">
    <citation type="journal article" date="2009" name="Plant Physiol.">
        <title>Cis-element- and transcriptome-based screening of root hair-specific genes and their functional characterization in Arabidopsis.</title>
        <authorList>
            <person name="Won S.-K."/>
            <person name="Lee Y.-J."/>
            <person name="Lee H.-Y."/>
            <person name="Heo Y.-K."/>
            <person name="Cho M."/>
            <person name="Cho H.-T."/>
        </authorList>
    </citation>
    <scope>FUNCTION</scope>
    <scope>TISSUE SPECIFICITY</scope>
</reference>
<keyword id="KW-0067">ATP-binding</keyword>
<keyword id="KW-0418">Kinase</keyword>
<keyword id="KW-0547">Nucleotide-binding</keyword>
<keyword id="KW-1185">Reference proteome</keyword>
<keyword id="KW-0723">Serine/threonine-protein kinase</keyword>
<keyword id="KW-0808">Transferase</keyword>
<proteinExistence type="evidence at protein level"/>
<accession>F4I4F2</accession>
<accession>A0ME72</accession>
<accession>Q1PFV6</accession>
<accession>Q9SA43</accession>
<protein>
    <recommendedName>
        <fullName evidence="7">Serine/threonine-protein kinase RHS3</fullName>
        <ecNumber evidence="3">2.7.11.1</ecNumber>
    </recommendedName>
    <alternativeName>
        <fullName evidence="5">AGC serine/threonine-protein kinase subfamily 1 member 6</fullName>
    </alternativeName>
    <alternativeName>
        <fullName evidence="6">Protein ROOT HAIR SPECIFIC 3</fullName>
    </alternativeName>
</protein>
<feature type="chain" id="PRO_0000431359" description="Serine/threonine-protein kinase RHS3">
    <location>
        <begin position="1"/>
        <end position="499"/>
    </location>
</feature>
<feature type="domain" description="Protein kinase" evidence="1">
    <location>
        <begin position="113"/>
        <end position="436"/>
    </location>
</feature>
<feature type="domain" description="AGC-kinase C-terminal" evidence="7">
    <location>
        <begin position="437"/>
        <end position="499"/>
    </location>
</feature>
<feature type="region of interest" description="Disordered" evidence="2">
    <location>
        <begin position="1"/>
        <end position="92"/>
    </location>
</feature>
<feature type="compositionally biased region" description="Basic and acidic residues" evidence="2">
    <location>
        <begin position="39"/>
        <end position="55"/>
    </location>
</feature>
<feature type="compositionally biased region" description="Low complexity" evidence="2">
    <location>
        <begin position="63"/>
        <end position="85"/>
    </location>
</feature>
<feature type="active site" description="Proton acceptor" evidence="1">
    <location>
        <position position="240"/>
    </location>
</feature>
<feature type="binding site" evidence="1">
    <location>
        <begin position="119"/>
        <end position="127"/>
    </location>
    <ligand>
        <name>ATP</name>
        <dbReference type="ChEBI" id="CHEBI:30616"/>
    </ligand>
</feature>
<feature type="binding site" evidence="1">
    <location>
        <position position="144"/>
    </location>
    <ligand>
        <name>ATP</name>
        <dbReference type="ChEBI" id="CHEBI:30616"/>
    </ligand>
</feature>
<sequence>MLLKPGNKLVSPETSHHRDSASNSSNHKCQQQKPRKDKQKQVEQNTKKIEEHQIKSESTLLISNHNVNMSSQSNNSESTSTNNSSKPHTGGDIRWDAVNSLKSRGIKLGISDFRVLKRLGYGDIGSVYLVELKGANPTTYFAMKVMDKASLVSRNKLLRAQTEREILSQLDHPFLPTLYSHFETDKFYCLVMEFCSGGNLYSLRQKQPNKCFTEDAARFFASEVLLALEYLHMLGIVYRDLKPENVLVRDDGHIMLSDFDLSLRCSVNPTLVKSFNGGGTTGIIDDNAAVQGCYQPSAFFPRMLQSSKKNRKSKSDFDGSLPELMAEPTNVKSMSFVGTHEYLAPEIIKNEGHGSAVDWWTFGIFIYELLHGATPFKGQGNKATLYNVIGQPLRFPEYSQVSSTAKDLIKGLLVKEPQNRIAYKRGATEIKQHPFFEGVNWALIRGETPPHLPEPVDFSCYVKKEKESLPPAATEKKSKMFDEANKSGSDPDYIVFEYF</sequence>